<dbReference type="EC" id="4.98.1.1" evidence="1"/>
<dbReference type="EMBL" id="AM040265">
    <property type="protein sequence ID" value="CAJ12241.1"/>
    <property type="molecule type" value="Genomic_DNA"/>
</dbReference>
<dbReference type="RefSeq" id="WP_002966503.1">
    <property type="nucleotide sequence ID" value="NZ_KN046823.1"/>
</dbReference>
<dbReference type="SMR" id="Q2YIS9"/>
<dbReference type="STRING" id="359391.BAB2_0075"/>
<dbReference type="GeneID" id="93015947"/>
<dbReference type="KEGG" id="bmf:BAB2_0075"/>
<dbReference type="PATRIC" id="fig|359391.11.peg.2023"/>
<dbReference type="HOGENOM" id="CLU_018884_0_0_5"/>
<dbReference type="PhylomeDB" id="Q2YIS9"/>
<dbReference type="UniPathway" id="UPA00252">
    <property type="reaction ID" value="UER00325"/>
</dbReference>
<dbReference type="PRO" id="PR:Q2YIS9"/>
<dbReference type="Proteomes" id="UP000002719">
    <property type="component" value="Chromosome II"/>
</dbReference>
<dbReference type="GO" id="GO:0005737">
    <property type="term" value="C:cytoplasm"/>
    <property type="evidence" value="ECO:0007669"/>
    <property type="project" value="UniProtKB-SubCell"/>
</dbReference>
<dbReference type="GO" id="GO:0004325">
    <property type="term" value="F:ferrochelatase activity"/>
    <property type="evidence" value="ECO:0007669"/>
    <property type="project" value="UniProtKB-UniRule"/>
</dbReference>
<dbReference type="GO" id="GO:0046872">
    <property type="term" value="F:metal ion binding"/>
    <property type="evidence" value="ECO:0007669"/>
    <property type="project" value="UniProtKB-KW"/>
</dbReference>
<dbReference type="GO" id="GO:0006783">
    <property type="term" value="P:heme biosynthetic process"/>
    <property type="evidence" value="ECO:0007669"/>
    <property type="project" value="UniProtKB-UniRule"/>
</dbReference>
<dbReference type="CDD" id="cd00419">
    <property type="entry name" value="Ferrochelatase_C"/>
    <property type="match status" value="1"/>
</dbReference>
<dbReference type="CDD" id="cd03411">
    <property type="entry name" value="Ferrochelatase_N"/>
    <property type="match status" value="1"/>
</dbReference>
<dbReference type="FunFam" id="3.40.50.1400:FF:000002">
    <property type="entry name" value="Ferrochelatase"/>
    <property type="match status" value="1"/>
</dbReference>
<dbReference type="Gene3D" id="3.40.50.1400">
    <property type="match status" value="2"/>
</dbReference>
<dbReference type="HAMAP" id="MF_00323">
    <property type="entry name" value="Ferrochelatase"/>
    <property type="match status" value="1"/>
</dbReference>
<dbReference type="InterPro" id="IPR001015">
    <property type="entry name" value="Ferrochelatase"/>
</dbReference>
<dbReference type="InterPro" id="IPR019772">
    <property type="entry name" value="Ferrochelatase_AS"/>
</dbReference>
<dbReference type="InterPro" id="IPR033644">
    <property type="entry name" value="Ferrochelatase_C"/>
</dbReference>
<dbReference type="InterPro" id="IPR033659">
    <property type="entry name" value="Ferrochelatase_N"/>
</dbReference>
<dbReference type="NCBIfam" id="TIGR00109">
    <property type="entry name" value="hemH"/>
    <property type="match status" value="1"/>
</dbReference>
<dbReference type="PANTHER" id="PTHR11108">
    <property type="entry name" value="FERROCHELATASE"/>
    <property type="match status" value="1"/>
</dbReference>
<dbReference type="PANTHER" id="PTHR11108:SF1">
    <property type="entry name" value="FERROCHELATASE, MITOCHONDRIAL"/>
    <property type="match status" value="1"/>
</dbReference>
<dbReference type="Pfam" id="PF00762">
    <property type="entry name" value="Ferrochelatase"/>
    <property type="match status" value="1"/>
</dbReference>
<dbReference type="SUPFAM" id="SSF53800">
    <property type="entry name" value="Chelatase"/>
    <property type="match status" value="1"/>
</dbReference>
<dbReference type="PROSITE" id="PS00534">
    <property type="entry name" value="FERROCHELATASE"/>
    <property type="match status" value="1"/>
</dbReference>
<comment type="function">
    <text evidence="1">Catalyzes the ferrous insertion into protoporphyrin IX.</text>
</comment>
<comment type="catalytic activity">
    <reaction evidence="1">
        <text>heme b + 2 H(+) = protoporphyrin IX + Fe(2+)</text>
        <dbReference type="Rhea" id="RHEA:22584"/>
        <dbReference type="ChEBI" id="CHEBI:15378"/>
        <dbReference type="ChEBI" id="CHEBI:29033"/>
        <dbReference type="ChEBI" id="CHEBI:57306"/>
        <dbReference type="ChEBI" id="CHEBI:60344"/>
        <dbReference type="EC" id="4.98.1.1"/>
    </reaction>
</comment>
<comment type="pathway">
    <text evidence="1">Porphyrin-containing compound metabolism; protoheme biosynthesis; protoheme from protoporphyrin-IX: step 1/1.</text>
</comment>
<comment type="subcellular location">
    <subcellularLocation>
        <location evidence="1">Cytoplasm</location>
    </subcellularLocation>
</comment>
<comment type="similarity">
    <text evidence="1">Belongs to the ferrochelatase family.</text>
</comment>
<keyword id="KW-0963">Cytoplasm</keyword>
<keyword id="KW-0350">Heme biosynthesis</keyword>
<keyword id="KW-0408">Iron</keyword>
<keyword id="KW-0456">Lyase</keyword>
<keyword id="KW-0479">Metal-binding</keyword>
<keyword id="KW-0627">Porphyrin biosynthesis</keyword>
<keyword id="KW-1185">Reference proteome</keyword>
<sequence length="352" mass="40083">MSGTDKVRVNVSQTAQTPLHTSAKLPKVGVLLVNLGTPDGTSYGPMRRYLAEFLSDRRVIEWSRLIWYPILYGIVLNTRPRRSGRLYDRIWNHENNESPLRTYTRAQGEKLAKALSDQPNVVVDWAMRYGQPSIESITDRLLQQGCERIVIFPLYPQYSATTTATVNDKFFEALMKKRFMPAIRTVPSYEAEPVYIDALARSVEKHLATLSFKPEVILTSYHGIPKSYSDKGDPYRQQCLETTRLLRERLGLGEDEMRATFQSRFGPEEWLQPYTDETVKELAKNGVKLVAVLNPGFVADCLETVDEIGNEAAEEFLENGGENFSHIPCLNDSEEGMKVIETLVRRELLGWV</sequence>
<protein>
    <recommendedName>
        <fullName evidence="1">Ferrochelatase</fullName>
        <ecNumber evidence="1">4.98.1.1</ecNumber>
    </recommendedName>
    <alternativeName>
        <fullName evidence="1">Heme synthase</fullName>
    </alternativeName>
    <alternativeName>
        <fullName evidence="1">Protoheme ferro-lyase</fullName>
    </alternativeName>
</protein>
<feature type="chain" id="PRO_1000019274" description="Ferrochelatase">
    <location>
        <begin position="1"/>
        <end position="352"/>
    </location>
</feature>
<feature type="binding site" evidence="1">
    <location>
        <position position="222"/>
    </location>
    <ligand>
        <name>Fe cation</name>
        <dbReference type="ChEBI" id="CHEBI:24875"/>
    </ligand>
</feature>
<feature type="binding site" evidence="1">
    <location>
        <position position="303"/>
    </location>
    <ligand>
        <name>Fe cation</name>
        <dbReference type="ChEBI" id="CHEBI:24875"/>
    </ligand>
</feature>
<proteinExistence type="inferred from homology"/>
<name>HEMH_BRUA2</name>
<accession>Q2YIS9</accession>
<reference key="1">
    <citation type="journal article" date="2005" name="Infect. Immun.">
        <title>Whole-genome analyses of speciation events in pathogenic Brucellae.</title>
        <authorList>
            <person name="Chain P.S."/>
            <person name="Comerci D.J."/>
            <person name="Tolmasky M.E."/>
            <person name="Larimer F.W."/>
            <person name="Malfatti S.A."/>
            <person name="Vergez L.M."/>
            <person name="Aguero F."/>
            <person name="Land M.L."/>
            <person name="Ugalde R.A."/>
            <person name="Garcia E."/>
        </authorList>
    </citation>
    <scope>NUCLEOTIDE SEQUENCE [LARGE SCALE GENOMIC DNA]</scope>
    <source>
        <strain>2308</strain>
    </source>
</reference>
<organism>
    <name type="scientific">Brucella abortus (strain 2308)</name>
    <dbReference type="NCBI Taxonomy" id="359391"/>
    <lineage>
        <taxon>Bacteria</taxon>
        <taxon>Pseudomonadati</taxon>
        <taxon>Pseudomonadota</taxon>
        <taxon>Alphaproteobacteria</taxon>
        <taxon>Hyphomicrobiales</taxon>
        <taxon>Brucellaceae</taxon>
        <taxon>Brucella/Ochrobactrum group</taxon>
        <taxon>Brucella</taxon>
    </lineage>
</organism>
<evidence type="ECO:0000255" key="1">
    <source>
        <dbReference type="HAMAP-Rule" id="MF_00323"/>
    </source>
</evidence>
<gene>
    <name evidence="1" type="primary">hemH</name>
    <name type="ordered locus">BAB2_0075</name>
</gene>